<accession>Q5ZLH9</accession>
<name>CDV3_CHICK</name>
<comment type="subcellular location">
    <subcellularLocation>
        <location evidence="1">Cytoplasm</location>
    </subcellularLocation>
</comment>
<comment type="similarity">
    <text evidence="3">Belongs to the CDV3 family.</text>
</comment>
<feature type="initiator methionine" description="Removed" evidence="1">
    <location>
        <position position="1"/>
    </location>
</feature>
<feature type="chain" id="PRO_0000299563" description="Protein CDV3 homolog">
    <location>
        <begin position="2"/>
        <end position="204"/>
    </location>
</feature>
<feature type="region of interest" description="Disordered" evidence="2">
    <location>
        <begin position="1"/>
        <end position="204"/>
    </location>
</feature>
<feature type="compositionally biased region" description="Basic and acidic residues" evidence="2">
    <location>
        <begin position="1"/>
        <end position="15"/>
    </location>
</feature>
<feature type="compositionally biased region" description="Low complexity" evidence="2">
    <location>
        <begin position="27"/>
        <end position="58"/>
    </location>
</feature>
<feature type="compositionally biased region" description="Basic and acidic residues" evidence="2">
    <location>
        <begin position="74"/>
        <end position="90"/>
    </location>
</feature>
<feature type="compositionally biased region" description="Polar residues" evidence="2">
    <location>
        <begin position="185"/>
        <end position="196"/>
    </location>
</feature>
<feature type="modified residue" description="N-acetylalanine" evidence="1">
    <location>
        <position position="2"/>
    </location>
</feature>
<dbReference type="EMBL" id="AJ719755">
    <property type="protein sequence ID" value="CAG31414.1"/>
    <property type="molecule type" value="mRNA"/>
</dbReference>
<dbReference type="RefSeq" id="NP_001026161.1">
    <property type="nucleotide sequence ID" value="NM_001030990.1"/>
</dbReference>
<dbReference type="FunCoup" id="Q5ZLH9">
    <property type="interactions" value="2688"/>
</dbReference>
<dbReference type="STRING" id="9031.ENSGALP00000058576"/>
<dbReference type="GlyGen" id="Q5ZLH9">
    <property type="glycosylation" value="1 site"/>
</dbReference>
<dbReference type="PaxDb" id="9031-ENSGALP00000036822"/>
<dbReference type="GeneID" id="420693"/>
<dbReference type="KEGG" id="gga:420693"/>
<dbReference type="CTD" id="55573"/>
<dbReference type="VEuPathDB" id="HostDB:geneid_420693"/>
<dbReference type="eggNOG" id="ENOG502QRFT">
    <property type="taxonomic scope" value="Eukaryota"/>
</dbReference>
<dbReference type="InParanoid" id="Q5ZLH9"/>
<dbReference type="OrthoDB" id="6288097at2759"/>
<dbReference type="PhylomeDB" id="Q5ZLH9"/>
<dbReference type="PRO" id="PR:Q5ZLH9"/>
<dbReference type="Proteomes" id="UP000000539">
    <property type="component" value="Unassembled WGS sequence"/>
</dbReference>
<dbReference type="GO" id="GO:0005737">
    <property type="term" value="C:cytoplasm"/>
    <property type="evidence" value="ECO:0000318"/>
    <property type="project" value="GO_Central"/>
</dbReference>
<dbReference type="InterPro" id="IPR026806">
    <property type="entry name" value="CDV3"/>
</dbReference>
<dbReference type="PANTHER" id="PTHR16284">
    <property type="entry name" value="PROTEIN CDV3 HOMOLOG"/>
    <property type="match status" value="1"/>
</dbReference>
<dbReference type="PANTHER" id="PTHR16284:SF13">
    <property type="entry name" value="PROTEIN CDV3 HOMOLOG"/>
    <property type="match status" value="1"/>
</dbReference>
<dbReference type="Pfam" id="PF15359">
    <property type="entry name" value="CDV3"/>
    <property type="match status" value="1"/>
</dbReference>
<gene>
    <name type="primary">CDV3</name>
    <name type="ORF">RCJMB04_6c13</name>
</gene>
<organism>
    <name type="scientific">Gallus gallus</name>
    <name type="common">Chicken</name>
    <dbReference type="NCBI Taxonomy" id="9031"/>
    <lineage>
        <taxon>Eukaryota</taxon>
        <taxon>Metazoa</taxon>
        <taxon>Chordata</taxon>
        <taxon>Craniata</taxon>
        <taxon>Vertebrata</taxon>
        <taxon>Euteleostomi</taxon>
        <taxon>Archelosauria</taxon>
        <taxon>Archosauria</taxon>
        <taxon>Dinosauria</taxon>
        <taxon>Saurischia</taxon>
        <taxon>Theropoda</taxon>
        <taxon>Coelurosauria</taxon>
        <taxon>Aves</taxon>
        <taxon>Neognathae</taxon>
        <taxon>Galloanserae</taxon>
        <taxon>Galliformes</taxon>
        <taxon>Phasianidae</taxon>
        <taxon>Phasianinae</taxon>
        <taxon>Gallus</taxon>
    </lineage>
</organism>
<evidence type="ECO:0000250" key="1"/>
<evidence type="ECO:0000256" key="2">
    <source>
        <dbReference type="SAM" id="MobiDB-lite"/>
    </source>
</evidence>
<evidence type="ECO:0000305" key="3"/>
<proteinExistence type="evidence at transcript level"/>
<sequence length="204" mass="21613">MAETEERSLDDFFAKRDKKKRKEKSGRSAAAASTASSASSAASSAAGAAAAAGGPRPTDGGGSGAAASSSGSAKSKEEDDWKEFEQKEEIDYSGLRVQSMQISEKEDDESEKREEPSDNWEETSGAVDRSSGPWNKSAPAPAPVVETIVTEPPEPVQTGGVYRPPGAREGGRPRRAQQGPPEIYSDTQFPSLQSTAKLVDSRKY</sequence>
<keyword id="KW-0007">Acetylation</keyword>
<keyword id="KW-0963">Cytoplasm</keyword>
<keyword id="KW-1185">Reference proteome</keyword>
<reference key="1">
    <citation type="journal article" date="2005" name="Genome Biol.">
        <title>Full-length cDNAs from chicken bursal lymphocytes to facilitate gene function analysis.</title>
        <authorList>
            <person name="Caldwell R.B."/>
            <person name="Kierzek A.M."/>
            <person name="Arakawa H."/>
            <person name="Bezzubov Y."/>
            <person name="Zaim J."/>
            <person name="Fiedler P."/>
            <person name="Kutter S."/>
            <person name="Blagodatski A."/>
            <person name="Kostovska D."/>
            <person name="Koter M."/>
            <person name="Plachy J."/>
            <person name="Carninci P."/>
            <person name="Hayashizaki Y."/>
            <person name="Buerstedde J.-M."/>
        </authorList>
    </citation>
    <scope>NUCLEOTIDE SEQUENCE [LARGE SCALE MRNA]</scope>
    <source>
        <strain>CB</strain>
        <tissue>Bursa of Fabricius</tissue>
    </source>
</reference>
<protein>
    <recommendedName>
        <fullName>Protein CDV3 homolog</fullName>
    </recommendedName>
</protein>